<dbReference type="EMBL" id="AB075868">
    <property type="protein sequence ID" value="BAB85574.2"/>
    <property type="status" value="ALT_INIT"/>
    <property type="molecule type" value="mRNA"/>
</dbReference>
<dbReference type="EMBL" id="AK027419">
    <property type="protein sequence ID" value="BAB55100.1"/>
    <property type="status" value="ALT_INIT"/>
    <property type="molecule type" value="mRNA"/>
</dbReference>
<dbReference type="EMBL" id="AK027445">
    <property type="protein sequence ID" value="BAB55116.1"/>
    <property type="status" value="ALT_INIT"/>
    <property type="molecule type" value="mRNA"/>
</dbReference>
<dbReference type="EMBL" id="AK027584">
    <property type="protein sequence ID" value="BAB55212.1"/>
    <property type="status" value="ALT_INIT"/>
    <property type="molecule type" value="mRNA"/>
</dbReference>
<dbReference type="EMBL" id="AK027634">
    <property type="protein sequence ID" value="BAB55251.1"/>
    <property type="molecule type" value="mRNA"/>
</dbReference>
<dbReference type="EMBL" id="AK027675">
    <property type="protein sequence ID" value="BAB55287.1"/>
    <property type="molecule type" value="mRNA"/>
</dbReference>
<dbReference type="EMBL" id="AK074795">
    <property type="protein sequence ID" value="BAC11214.1"/>
    <property type="molecule type" value="mRNA"/>
</dbReference>
<dbReference type="EMBL" id="BC000167">
    <property type="protein sequence ID" value="AAH00167.1"/>
    <property type="molecule type" value="mRNA"/>
</dbReference>
<dbReference type="EMBL" id="BC009348">
    <property type="protein sequence ID" value="AAH09348.1"/>
    <property type="molecule type" value="mRNA"/>
</dbReference>
<dbReference type="CCDS" id="CCDS10872.1">
    <molecule id="Q969X6-1"/>
</dbReference>
<dbReference type="RefSeq" id="NP_116219.2">
    <molecule id="Q969X6-1"/>
    <property type="nucleotide sequence ID" value="NM_032830.3"/>
</dbReference>
<dbReference type="PDB" id="7MQ8">
    <property type="method" value="EM"/>
    <property type="resolution" value="3.60 A"/>
    <property type="chains" value="LN=1-686"/>
</dbReference>
<dbReference type="PDB" id="7MQ9">
    <property type="method" value="EM"/>
    <property type="resolution" value="3.87 A"/>
    <property type="chains" value="LN=1-686"/>
</dbReference>
<dbReference type="PDB" id="7MQA">
    <property type="method" value="EM"/>
    <property type="resolution" value="2.70 A"/>
    <property type="chains" value="LN=1-686"/>
</dbReference>
<dbReference type="PDBsum" id="7MQ8"/>
<dbReference type="PDBsum" id="7MQ9"/>
<dbReference type="PDBsum" id="7MQA"/>
<dbReference type="EMDB" id="EMD-23936"/>
<dbReference type="EMDB" id="EMD-23937"/>
<dbReference type="EMDB" id="EMD-23938"/>
<dbReference type="SMR" id="Q969X6"/>
<dbReference type="BioGRID" id="124353">
    <property type="interactions" value="189"/>
</dbReference>
<dbReference type="ComplexPortal" id="CPX-2450">
    <property type="entry name" value="UTP-A complex"/>
</dbReference>
<dbReference type="CORUM" id="Q969X6"/>
<dbReference type="FunCoup" id="Q969X6">
    <property type="interactions" value="2514"/>
</dbReference>
<dbReference type="IntAct" id="Q969X6">
    <property type="interactions" value="63"/>
</dbReference>
<dbReference type="MINT" id="Q969X6"/>
<dbReference type="STRING" id="9606.ENSP00000327179"/>
<dbReference type="GlyGen" id="Q969X6">
    <property type="glycosylation" value="2 sites, 1 N-linked glycan (1 site), 1 O-linked glycan (1 site)"/>
</dbReference>
<dbReference type="iPTMnet" id="Q969X6"/>
<dbReference type="PhosphoSitePlus" id="Q969X6"/>
<dbReference type="SwissPalm" id="Q969X6"/>
<dbReference type="BioMuta" id="UTP4"/>
<dbReference type="DMDM" id="41016916"/>
<dbReference type="jPOST" id="Q969X6"/>
<dbReference type="MassIVE" id="Q969X6"/>
<dbReference type="PaxDb" id="9606-ENSP00000327179"/>
<dbReference type="PeptideAtlas" id="Q969X6"/>
<dbReference type="ProteomicsDB" id="75873">
    <molecule id="Q969X6-1"/>
</dbReference>
<dbReference type="ProteomicsDB" id="75874">
    <molecule id="Q969X6-2"/>
</dbReference>
<dbReference type="ProteomicsDB" id="75875">
    <molecule id="Q969X6-3"/>
</dbReference>
<dbReference type="Pumba" id="Q969X6"/>
<dbReference type="Antibodypedia" id="29826">
    <property type="antibodies" value="118 antibodies from 21 providers"/>
</dbReference>
<dbReference type="DNASU" id="84916"/>
<dbReference type="Ensembl" id="ENST00000314423.12">
    <molecule id="Q969X6-1"/>
    <property type="protein sequence ID" value="ENSP00000327179.7"/>
    <property type="gene ID" value="ENSG00000141076.18"/>
</dbReference>
<dbReference type="Ensembl" id="ENST00000352319.8">
    <molecule id="Q969X6-2"/>
    <property type="protein sequence ID" value="ENSP00000339164.4"/>
    <property type="gene ID" value="ENSG00000141076.18"/>
</dbReference>
<dbReference type="Ensembl" id="ENST00000563094.5">
    <molecule id="Q969X6-3"/>
    <property type="protein sequence ID" value="ENSP00000456622.1"/>
    <property type="gene ID" value="ENSG00000141076.18"/>
</dbReference>
<dbReference type="Ensembl" id="ENST00000575702.3">
    <property type="protein sequence ID" value="ENSP00000458843.2"/>
    <property type="gene ID" value="ENSG00000262788.3"/>
</dbReference>
<dbReference type="GeneID" id="84916"/>
<dbReference type="KEGG" id="hsa:84916"/>
<dbReference type="MANE-Select" id="ENST00000314423.12">
    <property type="protein sequence ID" value="ENSP00000327179.7"/>
    <property type="RefSeq nucleotide sequence ID" value="NM_032830.3"/>
    <property type="RefSeq protein sequence ID" value="NP_116219.2"/>
</dbReference>
<dbReference type="UCSC" id="uc002ewr.3">
    <molecule id="Q969X6-1"/>
    <property type="organism name" value="human"/>
</dbReference>
<dbReference type="AGR" id="HGNC:1983"/>
<dbReference type="CTD" id="84916"/>
<dbReference type="DisGeNET" id="84916"/>
<dbReference type="GeneCards" id="UTP4"/>
<dbReference type="HGNC" id="HGNC:1983">
    <property type="gene designation" value="UTP4"/>
</dbReference>
<dbReference type="HPA" id="ENSG00000141076">
    <property type="expression patterns" value="Low tissue specificity"/>
</dbReference>
<dbReference type="MalaCards" id="UTP4"/>
<dbReference type="MIM" id="607456">
    <property type="type" value="gene"/>
</dbReference>
<dbReference type="neXtProt" id="NX_Q969X6"/>
<dbReference type="OpenTargets" id="ENSG00000141076"/>
<dbReference type="Orphanet" id="168583">
    <property type="disease" value="Hereditary North American Indian childhood cirrhosis"/>
</dbReference>
<dbReference type="PharmGKB" id="PA26520"/>
<dbReference type="VEuPathDB" id="HostDB:ENSG00000141076"/>
<dbReference type="eggNOG" id="KOG2048">
    <property type="taxonomic scope" value="Eukaryota"/>
</dbReference>
<dbReference type="GeneTree" id="ENSGT00940000153533"/>
<dbReference type="HOGENOM" id="CLU_002392_3_0_1"/>
<dbReference type="InParanoid" id="Q969X6"/>
<dbReference type="OMA" id="STYITEW"/>
<dbReference type="OrthoDB" id="8883818at2759"/>
<dbReference type="PAN-GO" id="Q969X6">
    <property type="GO annotations" value="4 GO annotations based on evolutionary models"/>
</dbReference>
<dbReference type="PhylomeDB" id="Q969X6"/>
<dbReference type="TreeFam" id="TF313159"/>
<dbReference type="PathwayCommons" id="Q969X6"/>
<dbReference type="Reactome" id="R-HSA-6790901">
    <property type="pathway name" value="rRNA modification in the nucleus and cytosol"/>
</dbReference>
<dbReference type="Reactome" id="R-HSA-6791226">
    <property type="pathway name" value="Major pathway of rRNA processing in the nucleolus and cytosol"/>
</dbReference>
<dbReference type="SignaLink" id="Q969X6"/>
<dbReference type="BioGRID-ORCS" id="84916">
    <property type="hits" value="768 hits in 1143 CRISPR screens"/>
</dbReference>
<dbReference type="CD-CODE" id="91857CE7">
    <property type="entry name" value="Nucleolus"/>
</dbReference>
<dbReference type="ChiTaRS" id="UTP4">
    <property type="organism name" value="human"/>
</dbReference>
<dbReference type="GeneWiki" id="CIRH1A"/>
<dbReference type="GenomeRNAi" id="84916"/>
<dbReference type="Pharos" id="Q969X6">
    <property type="development level" value="Tbio"/>
</dbReference>
<dbReference type="PRO" id="PR:Q969X6"/>
<dbReference type="Proteomes" id="UP000005640">
    <property type="component" value="Chromosome 16"/>
</dbReference>
<dbReference type="RNAct" id="Q969X6">
    <property type="molecule type" value="protein"/>
</dbReference>
<dbReference type="Bgee" id="ENSG00000141076">
    <property type="expression patterns" value="Expressed in primordial germ cell in gonad and 104 other cell types or tissues"/>
</dbReference>
<dbReference type="ExpressionAtlas" id="Q969X6">
    <property type="expression patterns" value="baseline and differential"/>
</dbReference>
<dbReference type="GO" id="GO:0030686">
    <property type="term" value="C:90S preribosome"/>
    <property type="evidence" value="ECO:0007669"/>
    <property type="project" value="InterPro"/>
</dbReference>
<dbReference type="GO" id="GO:0005694">
    <property type="term" value="C:chromosome"/>
    <property type="evidence" value="ECO:0000314"/>
    <property type="project" value="UniProtKB"/>
</dbReference>
<dbReference type="GO" id="GO:0001650">
    <property type="term" value="C:fibrillar center"/>
    <property type="evidence" value="ECO:0000314"/>
    <property type="project" value="HPA"/>
</dbReference>
<dbReference type="GO" id="GO:0005730">
    <property type="term" value="C:nucleolus"/>
    <property type="evidence" value="ECO:0000314"/>
    <property type="project" value="UniProtKB"/>
</dbReference>
<dbReference type="GO" id="GO:0005654">
    <property type="term" value="C:nucleoplasm"/>
    <property type="evidence" value="ECO:0000304"/>
    <property type="project" value="Reactome"/>
</dbReference>
<dbReference type="GO" id="GO:0032040">
    <property type="term" value="C:small-subunit processome"/>
    <property type="evidence" value="ECO:0000314"/>
    <property type="project" value="UniProtKB"/>
</dbReference>
<dbReference type="GO" id="GO:0034455">
    <property type="term" value="C:t-UTP complex"/>
    <property type="evidence" value="ECO:0000314"/>
    <property type="project" value="UniProtKB"/>
</dbReference>
<dbReference type="GO" id="GO:0003723">
    <property type="term" value="F:RNA binding"/>
    <property type="evidence" value="ECO:0007005"/>
    <property type="project" value="UniProtKB"/>
</dbReference>
<dbReference type="GO" id="GO:0030490">
    <property type="term" value="P:maturation of SSU-rRNA"/>
    <property type="evidence" value="ECO:0000315"/>
    <property type="project" value="UniProtKB"/>
</dbReference>
<dbReference type="GO" id="GO:0000462">
    <property type="term" value="P:maturation of SSU-rRNA from tricistronic rRNA transcript (SSU-rRNA, 5.8S rRNA, LSU-rRNA)"/>
    <property type="evidence" value="ECO:0000318"/>
    <property type="project" value="GO_Central"/>
</dbReference>
<dbReference type="GO" id="GO:0006355">
    <property type="term" value="P:regulation of DNA-templated transcription"/>
    <property type="evidence" value="ECO:0000314"/>
    <property type="project" value="UniProtKB"/>
</dbReference>
<dbReference type="GO" id="GO:0042274">
    <property type="term" value="P:ribosomal small subunit biogenesis"/>
    <property type="evidence" value="ECO:0000314"/>
    <property type="project" value="UniProtKB"/>
</dbReference>
<dbReference type="FunFam" id="2.130.10.10:FF:000367">
    <property type="entry name" value="U3 small nucleolar RNA-associated protein 4 homolog"/>
    <property type="match status" value="1"/>
</dbReference>
<dbReference type="FunFam" id="2.130.10.10:FF:000441">
    <property type="entry name" value="U3 small nucleolar RNA-associated protein 4 homolog"/>
    <property type="match status" value="1"/>
</dbReference>
<dbReference type="FunFam" id="2.130.10.10:FF:000617">
    <property type="entry name" value="U3 small nucleolar RNA-associated protein 4 homolog"/>
    <property type="match status" value="1"/>
</dbReference>
<dbReference type="Gene3D" id="2.130.10.10">
    <property type="entry name" value="YVTN repeat-like/Quinoprotein amine dehydrogenase"/>
    <property type="match status" value="3"/>
</dbReference>
<dbReference type="InterPro" id="IPR046351">
    <property type="entry name" value="UTP4"/>
</dbReference>
<dbReference type="InterPro" id="IPR015943">
    <property type="entry name" value="WD40/YVTN_repeat-like_dom_sf"/>
</dbReference>
<dbReference type="InterPro" id="IPR036322">
    <property type="entry name" value="WD40_repeat_dom_sf"/>
</dbReference>
<dbReference type="InterPro" id="IPR001680">
    <property type="entry name" value="WD40_rpt"/>
</dbReference>
<dbReference type="PANTHER" id="PTHR44163">
    <property type="entry name" value="U3 SMALL NUCLEOLAR RNA-ASSOCIATED PROTEIN 4 HOMOLOG"/>
    <property type="match status" value="1"/>
</dbReference>
<dbReference type="PANTHER" id="PTHR44163:SF1">
    <property type="entry name" value="U3 SMALL NUCLEOLAR RNA-ASSOCIATED PROTEIN 4 HOMOLOG"/>
    <property type="match status" value="1"/>
</dbReference>
<dbReference type="Pfam" id="PF00400">
    <property type="entry name" value="WD40"/>
    <property type="match status" value="2"/>
</dbReference>
<dbReference type="SMART" id="SM00320">
    <property type="entry name" value="WD40"/>
    <property type="match status" value="10"/>
</dbReference>
<dbReference type="SUPFAM" id="SSF82171">
    <property type="entry name" value="DPP6 N-terminal domain-like"/>
    <property type="match status" value="1"/>
</dbReference>
<dbReference type="SUPFAM" id="SSF50978">
    <property type="entry name" value="WD40 repeat-like"/>
    <property type="match status" value="1"/>
</dbReference>
<dbReference type="PROSITE" id="PS50294">
    <property type="entry name" value="WD_REPEATS_REGION"/>
    <property type="match status" value="1"/>
</dbReference>
<comment type="function">
    <text evidence="4 5 7 9">Ribosome biogenesis factor. Involved in nucleolar processing of pre-18S ribosomal RNA. Part of the small subunit (SSU) processome, first precursor of the small eukaryotic ribosomal subunit. During the assembly of the SSU processome in the nucleolus, many ribosome biogenesis factors, an RNA chaperone and ribosomal proteins associate with the nascent pre-rRNA and work in concert to generate RNA folding, modifications, rearrangements and cleavage as well as targeted d Involved in SSU pre-rRNA processing at sites A', A0, 1 and 2b. Required for optimal pre-ribosomal RNA transcription by RNA polymerase (PubMed:17699751, PubMed:19732766, PubMed:34516797). May be a transcriptional regulator (PubMed:22916032).</text>
</comment>
<comment type="function">
    <text evidence="5">(Microbial infection) Acts as a positive regulator of HIVEP1 which specifically binds to the DNA sequence 5'-GGGACTTTCC-3' found in enhancer elements of numerous viral promoters such as those of HIV-1, SV40, or CMV.</text>
</comment>
<comment type="subunit">
    <text evidence="5 7 8 9 14">Interacts with HIVEP1 (PubMed:19732766) Interacts with NOL11 (PubMed:22916032). Part of the small subunit (SSU) processome, composed of more than 70 proteins and the RNA chaperone small nucleolar RNA (snoRNA) U3 (PubMed:34516797). May be a component of the proposed t-UTP subcomplex of the ribosomal small subunit (SSU) processome containing at least UTP4, WDR43, HEATR1, UTP15, WDR75 (PubMed:17699751, PubMed:22916032, PubMed:24219289).</text>
</comment>
<comment type="interaction">
    <interactant intactId="EBI-2602591">
        <id>Q969X6</id>
    </interactant>
    <interactant intactId="EBI-722264">
        <id>P15822</id>
        <label>HIVEP1</label>
    </interactant>
    <organismsDiffer>false</organismsDiffer>
    <experiments>3</experiments>
</comment>
<comment type="interaction">
    <interactant intactId="EBI-2602591">
        <id>Q969X6</id>
    </interactant>
    <interactant intactId="EBI-725885">
        <id>Q9H8H0</id>
        <label>NOL11</label>
    </interactant>
    <organismsDiffer>false</organismsDiffer>
    <experiments>10</experiments>
</comment>
<comment type="interaction">
    <interactant intactId="EBI-2602591">
        <id>Q969X6</id>
    </interactant>
    <interactant intactId="EBI-1048301">
        <id>Q8TED0</id>
        <label>UTP15</label>
    </interactant>
    <organismsDiffer>false</organismsDiffer>
    <experiments>5</experiments>
</comment>
<comment type="interaction">
    <interactant intactId="EBI-2602591">
        <id>Q969X6</id>
    </interactant>
    <interactant intactId="EBI-2563523">
        <id>Q15061</id>
        <label>WDR43</label>
    </interactant>
    <organismsDiffer>false</organismsDiffer>
    <experiments>6</experiments>
</comment>
<comment type="subcellular location">
    <subcellularLocation>
        <location evidence="2 3 8 9">Nucleus</location>
        <location evidence="2 3 8 9">Nucleolus</location>
    </subcellularLocation>
    <subcellularLocation>
        <location evidence="6">Chromosome</location>
    </subcellularLocation>
    <text evidence="8">Found predominantly at the fibrillar center.</text>
</comment>
<comment type="alternative products">
    <event type="alternative splicing"/>
    <isoform>
        <id>Q969X6-1</id>
        <name>1</name>
        <sequence type="displayed"/>
    </isoform>
    <isoform>
        <id>Q969X6-2</id>
        <name>2</name>
        <sequence type="described" ref="VSP_009201"/>
    </isoform>
    <isoform>
        <id>Q969X6-3</id>
        <name>3</name>
        <sequence type="described" ref="VSP_009202 VSP_009203"/>
    </isoform>
</comment>
<comment type="PTM">
    <text evidence="8">May be phosphorylated during mitosis; may control the association of this protein with WRD43 and UTP15.</text>
</comment>
<comment type="miscellaneous">
    <molecule>Isoform 3</molecule>
    <text evidence="13">May be due to intron retention.</text>
</comment>
<comment type="sequence caution" evidence="13">
    <conflict type="erroneous initiation">
        <sequence resource="EMBL-CDS" id="BAB55100"/>
    </conflict>
    <text>Truncated N-terminus.</text>
</comment>
<comment type="sequence caution" evidence="13">
    <conflict type="erroneous initiation">
        <sequence resource="EMBL-CDS" id="BAB55116"/>
    </conflict>
    <text>Truncated N-terminus.</text>
</comment>
<comment type="sequence caution" evidence="13">
    <conflict type="erroneous initiation">
        <sequence resource="EMBL-CDS" id="BAB55212"/>
    </conflict>
    <text>Truncated N-terminus.</text>
</comment>
<comment type="sequence caution" evidence="13">
    <conflict type="erroneous initiation">
        <sequence resource="EMBL-CDS" id="BAB85574"/>
    </conflict>
    <text>Extended N-terminus.</text>
</comment>
<keyword id="KW-0002">3D-structure</keyword>
<keyword id="KW-0025">Alternative splicing</keyword>
<keyword id="KW-0158">Chromosome</keyword>
<keyword id="KW-1017">Isopeptide bond</keyword>
<keyword id="KW-0539">Nucleus</keyword>
<keyword id="KW-0597">Phosphoprotein</keyword>
<keyword id="KW-1267">Proteomics identification</keyword>
<keyword id="KW-1185">Reference proteome</keyword>
<keyword id="KW-0677">Repeat</keyword>
<keyword id="KW-0690">Ribosome biogenesis</keyword>
<keyword id="KW-0698">rRNA processing</keyword>
<keyword id="KW-0804">Transcription</keyword>
<keyword id="KW-0805">Transcription regulation</keyword>
<keyword id="KW-0832">Ubl conjugation</keyword>
<keyword id="KW-0853">WD repeat</keyword>
<feature type="chain" id="PRO_0000050908" description="U3 small nucleolar RNA-associated protein 4 homolog">
    <location>
        <begin position="1"/>
        <end position="686"/>
    </location>
</feature>
<feature type="repeat" description="WD 1">
    <location>
        <begin position="7"/>
        <end position="50"/>
    </location>
</feature>
<feature type="repeat" description="WD 2">
    <location>
        <begin position="51"/>
        <end position="92"/>
    </location>
</feature>
<feature type="repeat" description="WD 3">
    <location>
        <begin position="93"/>
        <end position="135"/>
    </location>
</feature>
<feature type="repeat" description="WD 4">
    <location>
        <begin position="136"/>
        <end position="181"/>
    </location>
</feature>
<feature type="repeat" description="WD 5">
    <location>
        <begin position="182"/>
        <end position="226"/>
    </location>
</feature>
<feature type="repeat" description="WD 6">
    <location>
        <begin position="227"/>
        <end position="275"/>
    </location>
</feature>
<feature type="repeat" description="WD 7">
    <location>
        <begin position="276"/>
        <end position="317"/>
    </location>
</feature>
<feature type="repeat" description="WD 8">
    <location>
        <begin position="318"/>
        <end position="377"/>
    </location>
</feature>
<feature type="repeat" description="WD 9">
    <location>
        <begin position="378"/>
        <end position="427"/>
    </location>
</feature>
<feature type="repeat" description="WD 10">
    <location>
        <begin position="428"/>
        <end position="475"/>
    </location>
</feature>
<feature type="repeat" description="WD 11">
    <location>
        <begin position="476"/>
        <end position="516"/>
    </location>
</feature>
<feature type="repeat" description="WD 12">
    <location>
        <begin position="517"/>
        <end position="566"/>
    </location>
</feature>
<feature type="repeat" description="WD 13">
    <location>
        <begin position="567"/>
        <end position="627"/>
    </location>
</feature>
<feature type="repeat" description="WD 14">
    <location>
        <begin position="628"/>
        <end position="666"/>
    </location>
</feature>
<feature type="cross-link" description="Glycyl lysine isopeptide (Lys-Gly) (interchain with G-Cter in SUMO2)" evidence="19">
    <location>
        <position position="321"/>
    </location>
</feature>
<feature type="splice variant" id="VSP_009201" description="In isoform 2." evidence="11">
    <location>
        <begin position="368"/>
        <end position="482"/>
    </location>
</feature>
<feature type="splice variant" id="VSP_009202" description="In isoform 3." evidence="10 11">
    <original>PLPNDKTLLYNPFP</original>
    <variation>VSSSLLPPKSSSES</variation>
    <location>
        <begin position="612"/>
        <end position="625"/>
    </location>
</feature>
<feature type="splice variant" id="VSP_009203" description="In isoform 3." evidence="10 11">
    <location>
        <begin position="626"/>
        <end position="686"/>
    </location>
</feature>
<feature type="sequence variant" id="VAR_053388" description="In dbSNP:rs8056684.">
    <original>R</original>
    <variation>H</variation>
    <location>
        <position position="438"/>
    </location>
</feature>
<feature type="sequence variant" id="VAR_017445" description="Found in patients with North American Indian childhood cirrhosis; uncertain significance; does not affect nucleolar protein location; decreased interaction with HIVEP1 measured in yeast two-hybrid screening; dbSNP:rs119465999." evidence="1 3 5">
    <original>R</original>
    <variation>W</variation>
    <location>
        <position position="565"/>
    </location>
</feature>
<feature type="sequence conflict" description="In Ref. 2; BAB55116." evidence="13" ref="2">
    <original>G</original>
    <variation>V</variation>
    <location>
        <position position="101"/>
    </location>
</feature>
<feature type="sequence conflict" description="In Ref. 2; BAB55251." evidence="13" ref="2">
    <original>V</original>
    <variation>M</variation>
    <location>
        <position position="290"/>
    </location>
</feature>
<feature type="sequence conflict" description="In Ref. 2; BAB55100." evidence="13" ref="2">
    <original>N</original>
    <variation>S</variation>
    <location>
        <position position="378"/>
    </location>
</feature>
<feature type="sequence conflict" description="In Ref. 2; BAC11214." evidence="13" ref="2">
    <original>N</original>
    <variation>S</variation>
    <location>
        <position position="419"/>
    </location>
</feature>
<feature type="sequence conflict" description="In Ref. 2; BAB55100." evidence="13" ref="2">
    <original>M</original>
    <variation>V</variation>
    <location>
        <position position="594"/>
    </location>
</feature>
<feature type="sequence conflict" description="In Ref. 2; BAC11214." evidence="13" ref="2">
    <original>F</original>
    <variation>L</variation>
    <location>
        <position position="624"/>
    </location>
</feature>
<reference key="1">
    <citation type="journal article" date="2001" name="DNA Res.">
        <title>Prediction of the coding sequences of unidentified human genes. XXII. The complete sequences of 50 new cDNA clones which code for large proteins.</title>
        <authorList>
            <person name="Nagase T."/>
            <person name="Kikuno R."/>
            <person name="Ohara O."/>
        </authorList>
    </citation>
    <scope>NUCLEOTIDE SEQUENCE [LARGE SCALE MRNA] (ISOFORM 3)</scope>
    <source>
        <tissue>Brain</tissue>
    </source>
</reference>
<reference key="2">
    <citation type="journal article" date="2004" name="Nat. Genet.">
        <title>Complete sequencing and characterization of 21,243 full-length human cDNAs.</title>
        <authorList>
            <person name="Ota T."/>
            <person name="Suzuki Y."/>
            <person name="Nishikawa T."/>
            <person name="Otsuki T."/>
            <person name="Sugiyama T."/>
            <person name="Irie R."/>
            <person name="Wakamatsu A."/>
            <person name="Hayashi K."/>
            <person name="Sato H."/>
            <person name="Nagai K."/>
            <person name="Kimura K."/>
            <person name="Makita H."/>
            <person name="Sekine M."/>
            <person name="Obayashi M."/>
            <person name="Nishi T."/>
            <person name="Shibahara T."/>
            <person name="Tanaka T."/>
            <person name="Ishii S."/>
            <person name="Yamamoto J."/>
            <person name="Saito K."/>
            <person name="Kawai Y."/>
            <person name="Isono Y."/>
            <person name="Nakamura Y."/>
            <person name="Nagahari K."/>
            <person name="Murakami K."/>
            <person name="Yasuda T."/>
            <person name="Iwayanagi T."/>
            <person name="Wagatsuma M."/>
            <person name="Shiratori A."/>
            <person name="Sudo H."/>
            <person name="Hosoiri T."/>
            <person name="Kaku Y."/>
            <person name="Kodaira H."/>
            <person name="Kondo H."/>
            <person name="Sugawara M."/>
            <person name="Takahashi M."/>
            <person name="Kanda K."/>
            <person name="Yokoi T."/>
            <person name="Furuya T."/>
            <person name="Kikkawa E."/>
            <person name="Omura Y."/>
            <person name="Abe K."/>
            <person name="Kamihara K."/>
            <person name="Katsuta N."/>
            <person name="Sato K."/>
            <person name="Tanikawa M."/>
            <person name="Yamazaki M."/>
            <person name="Ninomiya K."/>
            <person name="Ishibashi T."/>
            <person name="Yamashita H."/>
            <person name="Murakawa K."/>
            <person name="Fujimori K."/>
            <person name="Tanai H."/>
            <person name="Kimata M."/>
            <person name="Watanabe M."/>
            <person name="Hiraoka S."/>
            <person name="Chiba Y."/>
            <person name="Ishida S."/>
            <person name="Ono Y."/>
            <person name="Takiguchi S."/>
            <person name="Watanabe S."/>
            <person name="Yosida M."/>
            <person name="Hotuta T."/>
            <person name="Kusano J."/>
            <person name="Kanehori K."/>
            <person name="Takahashi-Fujii A."/>
            <person name="Hara H."/>
            <person name="Tanase T.-O."/>
            <person name="Nomura Y."/>
            <person name="Togiya S."/>
            <person name="Komai F."/>
            <person name="Hara R."/>
            <person name="Takeuchi K."/>
            <person name="Arita M."/>
            <person name="Imose N."/>
            <person name="Musashino K."/>
            <person name="Yuuki H."/>
            <person name="Oshima A."/>
            <person name="Sasaki N."/>
            <person name="Aotsuka S."/>
            <person name="Yoshikawa Y."/>
            <person name="Matsunawa H."/>
            <person name="Ichihara T."/>
            <person name="Shiohata N."/>
            <person name="Sano S."/>
            <person name="Moriya S."/>
            <person name="Momiyama H."/>
            <person name="Satoh N."/>
            <person name="Takami S."/>
            <person name="Terashima Y."/>
            <person name="Suzuki O."/>
            <person name="Nakagawa S."/>
            <person name="Senoh A."/>
            <person name="Mizoguchi H."/>
            <person name="Goto Y."/>
            <person name="Shimizu F."/>
            <person name="Wakebe H."/>
            <person name="Hishigaki H."/>
            <person name="Watanabe T."/>
            <person name="Sugiyama A."/>
            <person name="Takemoto M."/>
            <person name="Kawakami B."/>
            <person name="Yamazaki M."/>
            <person name="Watanabe K."/>
            <person name="Kumagai A."/>
            <person name="Itakura S."/>
            <person name="Fukuzumi Y."/>
            <person name="Fujimori Y."/>
            <person name="Komiyama M."/>
            <person name="Tashiro H."/>
            <person name="Tanigami A."/>
            <person name="Fujiwara T."/>
            <person name="Ono T."/>
            <person name="Yamada K."/>
            <person name="Fujii Y."/>
            <person name="Ozaki K."/>
            <person name="Hirao M."/>
            <person name="Ohmori Y."/>
            <person name="Kawabata A."/>
            <person name="Hikiji T."/>
            <person name="Kobatake N."/>
            <person name="Inagaki H."/>
            <person name="Ikema Y."/>
            <person name="Okamoto S."/>
            <person name="Okitani R."/>
            <person name="Kawakami T."/>
            <person name="Noguchi S."/>
            <person name="Itoh T."/>
            <person name="Shigeta K."/>
            <person name="Senba T."/>
            <person name="Matsumura K."/>
            <person name="Nakajima Y."/>
            <person name="Mizuno T."/>
            <person name="Morinaga M."/>
            <person name="Sasaki M."/>
            <person name="Togashi T."/>
            <person name="Oyama M."/>
            <person name="Hata H."/>
            <person name="Watanabe M."/>
            <person name="Komatsu T."/>
            <person name="Mizushima-Sugano J."/>
            <person name="Satoh T."/>
            <person name="Shirai Y."/>
            <person name="Takahashi Y."/>
            <person name="Nakagawa K."/>
            <person name="Okumura K."/>
            <person name="Nagase T."/>
            <person name="Nomura N."/>
            <person name="Kikuchi H."/>
            <person name="Masuho Y."/>
            <person name="Yamashita R."/>
            <person name="Nakai K."/>
            <person name="Yada T."/>
            <person name="Nakamura Y."/>
            <person name="Ohara O."/>
            <person name="Isogai T."/>
            <person name="Sugano S."/>
        </authorList>
    </citation>
    <scope>NUCLEOTIDE SEQUENCE [LARGE SCALE MRNA] (ISOFORM 1)</scope>
    <scope>NUCLEOTIDE SEQUENCE [LARGE SCALE MRNA] OF 95-686 (ISOFORM 2)</scope>
    <scope>NUCLEOTIDE SEQUENCE [LARGE SCALE MRNA] OF 444-686 (ISOFORM 3)</scope>
</reference>
<reference key="3">
    <citation type="journal article" date="2004" name="Genome Res.">
        <title>The status, quality, and expansion of the NIH full-length cDNA project: the Mammalian Gene Collection (MGC).</title>
        <authorList>
            <consortium name="The MGC Project Team"/>
        </authorList>
    </citation>
    <scope>NUCLEOTIDE SEQUENCE [LARGE SCALE MRNA] (ISOFORM 1)</scope>
    <source>
        <tissue>Muscle</tissue>
        <tissue>Placenta</tissue>
    </source>
</reference>
<reference key="4">
    <citation type="journal article" date="2002" name="Mol. Biol. Cell">
        <title>Functional proteomic analysis of human nucleolus.</title>
        <authorList>
            <person name="Scherl A."/>
            <person name="Coute Y."/>
            <person name="Deon C."/>
            <person name="Calle A."/>
            <person name="Kindbeiter K."/>
            <person name="Sanchez J.-C."/>
            <person name="Greco A."/>
            <person name="Hochstrasser D.F."/>
            <person name="Diaz J.-J."/>
        </authorList>
    </citation>
    <scope>SUBCELLULAR LOCATION [LARGE SCALE ANALYSIS]</scope>
    <source>
        <tissue>Cervix carcinoma</tissue>
    </source>
</reference>
<reference key="5">
    <citation type="journal article" date="2005" name="Exp. Cell Res.">
        <title>Nucleolar localization of cirhin, the protein mutated in North American Indian childhood cirrhosis.</title>
        <authorList>
            <person name="Yu B."/>
            <person name="Mitchell G.A."/>
            <person name="Richter A."/>
        </authorList>
    </citation>
    <scope>SUBCELLULAR LOCATION</scope>
    <scope>CHARACTERIZATION OF VARIANT TRP-565</scope>
</reference>
<reference key="6">
    <citation type="journal article" date="2007" name="Genes Dev.">
        <title>Recruitment of factors linking transcription and processing of pre-rRNA to NOR chromatin is UBF-dependent and occurs independent of transcription in human cells.</title>
        <authorList>
            <person name="Prieto J.L."/>
            <person name="McStay B."/>
        </authorList>
    </citation>
    <scope>FUNCTION</scope>
    <scope>SUBUNIT</scope>
</reference>
<reference key="7">
    <citation type="journal article" date="2009" name="Exp. Cell Res.">
        <title>Cirhin up-regulates a canonical NF-kappaB element through strong interaction with Cirip/HIVEP1.</title>
        <authorList>
            <person name="Yu B."/>
            <person name="Mitchell G.A."/>
            <person name="Richter A."/>
        </authorList>
    </citation>
    <scope>FUNCTION</scope>
    <scope>INTERACTION WITH HIVEP1</scope>
    <scope>CHARACTERIZATION OF VARIANT TRP-565</scope>
</reference>
<reference key="8">
    <citation type="journal article" date="2010" name="Cell">
        <title>The protein composition of mitotic chromosomes determined using multiclassifier combinatorial proteomics.</title>
        <authorList>
            <person name="Ohta S."/>
            <person name="Bukowski-Wills J.C."/>
            <person name="Sanchez-Pulido L."/>
            <person name="Alves Fde L."/>
            <person name="Wood L."/>
            <person name="Chen Z.A."/>
            <person name="Platani M."/>
            <person name="Fischer L."/>
            <person name="Hudson D.F."/>
            <person name="Ponting C.P."/>
            <person name="Fukagawa T."/>
            <person name="Earnshaw W.C."/>
            <person name="Rappsilber J."/>
        </authorList>
    </citation>
    <scope>SUBCELLULAR LOCATION</scope>
</reference>
<reference key="9">
    <citation type="journal article" date="2012" name="PLoS Genet.">
        <title>NOL11, implicated in the pathogenesis of North American Indian childhood cirrhosis, is required for pre-rRNA transcription and processing.</title>
        <authorList>
            <person name="Freed E.F."/>
            <person name="Prieto J.L."/>
            <person name="McCann K.L."/>
            <person name="McStay B."/>
            <person name="Baserga S.J."/>
        </authorList>
    </citation>
    <scope>FUNCTION</scope>
    <scope>INTERACTION WITH NOL11</scope>
    <scope>POSSIBLE ASSOCIATION IN THE SSU PROCESSOME T-UTP SUBCOMPLEX</scope>
</reference>
<reference key="10">
    <citation type="journal article" date="2013" name="Biochem. Cell Biol.">
        <title>Interaction, mobility, and phosphorylation of human orthologues of WD repeat-containing components of the yeast SSU processome t-UTP sub-complex.</title>
        <authorList>
            <person name="Sato M."/>
            <person name="Araki N."/>
            <person name="Kumeta M."/>
            <person name="Takeyasu K."/>
            <person name="Taguchi Y."/>
            <person name="Asai T."/>
            <person name="Furukawa K."/>
            <person name="Horigome T."/>
        </authorList>
    </citation>
    <scope>SUBCELLULAR LOCATION</scope>
    <scope>INTERACTION WITH UTP15 AND WDR43</scope>
    <scope>IDENTIFICATION BY MASS SPECTROMETRY</scope>
</reference>
<reference key="11">
    <citation type="journal article" date="2017" name="Nat. Struct. Mol. Biol.">
        <title>Site-specific mapping of the human SUMO proteome reveals co-modification with phosphorylation.</title>
        <authorList>
            <person name="Hendriks I.A."/>
            <person name="Lyon D."/>
            <person name="Young C."/>
            <person name="Jensen L.J."/>
            <person name="Vertegaal A.C."/>
            <person name="Nielsen M.L."/>
        </authorList>
    </citation>
    <scope>SUMOYLATION [LARGE SCALE ANALYSIS] AT LYS-321</scope>
    <scope>IDENTIFICATION BY MASS SPECTROMETRY [LARGE SCALE ANALYSIS]</scope>
</reference>
<reference evidence="16 17 18" key="12">
    <citation type="journal article" date="2021" name="Science">
        <title>Nucleolar maturation of the human small subunit processome.</title>
        <authorList>
            <person name="Singh S."/>
            <person name="Vanden Broeck A."/>
            <person name="Miller L."/>
            <person name="Chaker-Margot M."/>
            <person name="Klinge S."/>
        </authorList>
    </citation>
    <scope>STRUCTURE BY ELECTRON MICROSCOPY (2.70 ANGSTROMS)</scope>
    <scope>FUNCTION</scope>
    <scope>SUBUNIT</scope>
    <scope>SUBCELLULAR LOCATION</scope>
</reference>
<reference key="13">
    <citation type="journal article" date="2002" name="Am. J. Hum. Genet.">
        <title>A missense mutation (R565W) in cirhin (FLJ14728) in North American Indian childhood cirrhosis.</title>
        <authorList>
            <person name="Chagnon P."/>
            <person name="Michaud J."/>
            <person name="Mitchell G."/>
            <person name="Mercier J."/>
            <person name="Marion J.-F."/>
            <person name="Drouin E."/>
            <person name="Rasquin-Weber A."/>
            <person name="Hudson T.J."/>
            <person name="Richter A."/>
        </authorList>
    </citation>
    <scope>VARIANT TRP-565</scope>
</reference>
<reference key="14">
    <citation type="journal article" date="2016" name="Nature">
        <title>Analysis of protein-coding genetic variation in 60,706 humans.</title>
        <authorList>
            <consortium name="Exome Aggregation Consortium"/>
            <person name="Lek M."/>
            <person name="Karczewski K.J."/>
            <person name="Minikel E.V."/>
            <person name="Samocha K.E."/>
            <person name="Banks E."/>
            <person name="Fennell T."/>
            <person name="O'Donnell-Luria A.H."/>
            <person name="Ware J.S."/>
            <person name="Hill A.J."/>
            <person name="Cummings B.B."/>
            <person name="Tukiainen T."/>
            <person name="Birnbaum D.P."/>
            <person name="Kosmicki J.A."/>
            <person name="Duncan L.E."/>
            <person name="Estrada K."/>
            <person name="Zhao F."/>
            <person name="Zou J."/>
            <person name="Pierce-Hoffman E."/>
            <person name="Berghout J."/>
            <person name="Cooper D.N."/>
            <person name="Deflaux N."/>
            <person name="DePristo M."/>
            <person name="Do R."/>
            <person name="Flannick J."/>
            <person name="Fromer M."/>
            <person name="Gauthier L."/>
            <person name="Goldstein J."/>
            <person name="Gupta N."/>
            <person name="Howrigan D."/>
            <person name="Kiezun A."/>
            <person name="Kurki M.I."/>
            <person name="Moonshine A.L."/>
            <person name="Natarajan P."/>
            <person name="Orozco L."/>
            <person name="Peloso G.M."/>
            <person name="Poplin R."/>
            <person name="Rivas M.A."/>
            <person name="Ruano-Rubio V."/>
            <person name="Rose S.A."/>
            <person name="Ruderfer D.M."/>
            <person name="Shakir K."/>
            <person name="Stenson P.D."/>
            <person name="Stevens C."/>
            <person name="Thomas B.P."/>
            <person name="Tiao G."/>
            <person name="Tusie-Luna M.T."/>
            <person name="Weisburd B."/>
            <person name="Won H.H."/>
            <person name="Yu D."/>
            <person name="Altshuler D.M."/>
            <person name="Ardissino D."/>
            <person name="Boehnke M."/>
            <person name="Danesh J."/>
            <person name="Donnelly S."/>
            <person name="Elosua R."/>
            <person name="Florez J.C."/>
            <person name="Gabriel S.B."/>
            <person name="Getz G."/>
            <person name="Glatt S.J."/>
            <person name="Hultman C.M."/>
            <person name="Kathiresan S."/>
            <person name="Laakso M."/>
            <person name="McCarroll S."/>
            <person name="McCarthy M.I."/>
            <person name="McGovern D."/>
            <person name="McPherson R."/>
            <person name="Neale B.M."/>
            <person name="Palotie A."/>
            <person name="Purcell S.M."/>
            <person name="Saleheen D."/>
            <person name="Scharf J.M."/>
            <person name="Sklar P."/>
            <person name="Sullivan P.F."/>
            <person name="Tuomilehto J."/>
            <person name="Tsuang M.T."/>
            <person name="Watkins H.C."/>
            <person name="Wilson J.G."/>
            <person name="Daly M.J."/>
            <person name="MacArthur D.G."/>
        </authorList>
    </citation>
    <scope>VARIANT TRP-565</scope>
</reference>
<name>UTP4_HUMAN</name>
<sequence length="686" mass="76890">MGEFKVHRVRFFNYVPSGIRCVAYNNQSNRLAVSRTDGTVEIYNLSANYFQEKFFPGHESRATEALCWAEGQRLFSAGLNGEIMEYDLQALNIKYAMDAFGGPIWSMAASPSGSQLLVGCEDGSVKLFQITPDKIQFERNFDRQKSRILSLSWHPSGTHIAAGSIDYISVFDVKSGSAVHKMIVDRQYMGVSKRKCIVWGVAFLSDGTIISVDSAGKVQFWDSATGTLVKSHLIANADVQSIAVADQEDSFVVGTAEGTVFHFQLVPVTSNSSEKQWVRTKPFQHHTHDVRTVAHSPTALISGGTDTHLVFRPLMEKVEVKNYDAALRKITFPHRCLISCSKKRQLLLFQFAHHLELWRLGSTVATGKNGDTLPLSKNADHLLHLKTKGPENIICSCISPCGSWIAYSTVSRFFLYRLNYEHDNISLKRVSKMPAFLRSALQILFSEDSTKLFVASNQGALHIVQLSGGSFKHLHAFQPQSGTVEAMCLLAVSPDGNWLAASGTSAGVHVYNVKQLKLHCTVPAYNFPVTAMAIAPNTNNLVIAHSDQQVFEYSIPDKQYTDWSRTVQKQGFHHLWLQRDTPITHISFHPKRPMHILLHDAYMFCIIDKSLPLPNDKTLLYNPFPPTNESDVIRRRTAHAFKISKIYKPLLFMDLLDERTLVAVERPLDDIIAQLPPPIKKKKFGT</sequence>
<organism>
    <name type="scientific">Homo sapiens</name>
    <name type="common">Human</name>
    <dbReference type="NCBI Taxonomy" id="9606"/>
    <lineage>
        <taxon>Eukaryota</taxon>
        <taxon>Metazoa</taxon>
        <taxon>Chordata</taxon>
        <taxon>Craniata</taxon>
        <taxon>Vertebrata</taxon>
        <taxon>Euteleostomi</taxon>
        <taxon>Mammalia</taxon>
        <taxon>Eutheria</taxon>
        <taxon>Euarchontoglires</taxon>
        <taxon>Primates</taxon>
        <taxon>Haplorrhini</taxon>
        <taxon>Catarrhini</taxon>
        <taxon>Hominidae</taxon>
        <taxon>Homo</taxon>
    </lineage>
</organism>
<protein>
    <recommendedName>
        <fullName>U3 small nucleolar RNA-associated protein 4 homolog</fullName>
    </recommendedName>
    <alternativeName>
        <fullName>Cirhin</fullName>
    </alternativeName>
    <alternativeName>
        <fullName>UTP4 small subunit processome component</fullName>
    </alternativeName>
</protein>
<accession>Q969X6</accession>
<accession>Q8NCD9</accession>
<accession>Q8TF14</accession>
<accession>Q96SP0</accession>
<accession>Q96SR9</accession>
<accession>Q96SZ9</accession>
<accession>Q96T13</accession>
<accession>Q9BWK6</accession>
<gene>
    <name evidence="15" type="primary">UTP4</name>
    <name type="synonym">CIRH1A</name>
    <name evidence="12" type="synonym">cPERP-E</name>
    <name type="synonym">KIAA1988</name>
</gene>
<proteinExistence type="evidence at protein level"/>
<evidence type="ECO:0000269" key="1">
    <source>
    </source>
</evidence>
<evidence type="ECO:0000269" key="2">
    <source>
    </source>
</evidence>
<evidence type="ECO:0000269" key="3">
    <source>
    </source>
</evidence>
<evidence type="ECO:0000269" key="4">
    <source>
    </source>
</evidence>
<evidence type="ECO:0000269" key="5">
    <source>
    </source>
</evidence>
<evidence type="ECO:0000269" key="6">
    <source>
    </source>
</evidence>
<evidence type="ECO:0000269" key="7">
    <source>
    </source>
</evidence>
<evidence type="ECO:0000269" key="8">
    <source>
    </source>
</evidence>
<evidence type="ECO:0000269" key="9">
    <source>
    </source>
</evidence>
<evidence type="ECO:0000303" key="10">
    <source>
    </source>
</evidence>
<evidence type="ECO:0000303" key="11">
    <source>
    </source>
</evidence>
<evidence type="ECO:0000303" key="12">
    <source>
    </source>
</evidence>
<evidence type="ECO:0000305" key="13"/>
<evidence type="ECO:0000305" key="14">
    <source>
    </source>
</evidence>
<evidence type="ECO:0000312" key="15">
    <source>
        <dbReference type="HGNC" id="HGNC:1983"/>
    </source>
</evidence>
<evidence type="ECO:0007744" key="16">
    <source>
        <dbReference type="PDB" id="7MQ8"/>
    </source>
</evidence>
<evidence type="ECO:0007744" key="17">
    <source>
        <dbReference type="PDB" id="7MQ9"/>
    </source>
</evidence>
<evidence type="ECO:0007744" key="18">
    <source>
        <dbReference type="PDB" id="7MQA"/>
    </source>
</evidence>
<evidence type="ECO:0007744" key="19">
    <source>
    </source>
</evidence>